<keyword id="KW-0066">ATP synthesis</keyword>
<keyword id="KW-0997">Cell inner membrane</keyword>
<keyword id="KW-1003">Cell membrane</keyword>
<keyword id="KW-0139">CF(1)</keyword>
<keyword id="KW-0375">Hydrogen ion transport</keyword>
<keyword id="KW-0406">Ion transport</keyword>
<keyword id="KW-0472">Membrane</keyword>
<keyword id="KW-0813">Transport</keyword>
<reference key="1">
    <citation type="submission" date="2008-08" db="EMBL/GenBank/DDBJ databases">
        <title>Complete sequence of Acidithiobacillus ferrooxidans ATCC 53993.</title>
        <authorList>
            <person name="Lucas S."/>
            <person name="Copeland A."/>
            <person name="Lapidus A."/>
            <person name="Glavina del Rio T."/>
            <person name="Dalin E."/>
            <person name="Tice H."/>
            <person name="Bruce D."/>
            <person name="Goodwin L."/>
            <person name="Pitluck S."/>
            <person name="Sims D."/>
            <person name="Brettin T."/>
            <person name="Detter J.C."/>
            <person name="Han C."/>
            <person name="Kuske C.R."/>
            <person name="Larimer F."/>
            <person name="Land M."/>
            <person name="Hauser L."/>
            <person name="Kyrpides N."/>
            <person name="Lykidis A."/>
            <person name="Borole A.P."/>
        </authorList>
    </citation>
    <scope>NUCLEOTIDE SEQUENCE [LARGE SCALE GENOMIC DNA]</scope>
    <source>
        <strain>ATCC 53993 / BNL-5-31</strain>
    </source>
</reference>
<name>ATPD_ACIF5</name>
<evidence type="ECO:0000255" key="1">
    <source>
        <dbReference type="HAMAP-Rule" id="MF_01416"/>
    </source>
</evidence>
<dbReference type="EMBL" id="CP001132">
    <property type="protein sequence ID" value="ACH84996.1"/>
    <property type="molecule type" value="Genomic_DNA"/>
</dbReference>
<dbReference type="RefSeq" id="WP_009561112.1">
    <property type="nucleotide sequence ID" value="NC_011206.1"/>
</dbReference>
<dbReference type="SMR" id="B5ER45"/>
<dbReference type="KEGG" id="afe:Lferr_2810"/>
<dbReference type="eggNOG" id="COG0712">
    <property type="taxonomic scope" value="Bacteria"/>
</dbReference>
<dbReference type="HOGENOM" id="CLU_085114_3_0_6"/>
<dbReference type="GO" id="GO:0005886">
    <property type="term" value="C:plasma membrane"/>
    <property type="evidence" value="ECO:0007669"/>
    <property type="project" value="UniProtKB-SubCell"/>
</dbReference>
<dbReference type="GO" id="GO:0045259">
    <property type="term" value="C:proton-transporting ATP synthase complex"/>
    <property type="evidence" value="ECO:0007669"/>
    <property type="project" value="UniProtKB-KW"/>
</dbReference>
<dbReference type="GO" id="GO:0046933">
    <property type="term" value="F:proton-transporting ATP synthase activity, rotational mechanism"/>
    <property type="evidence" value="ECO:0007669"/>
    <property type="project" value="UniProtKB-UniRule"/>
</dbReference>
<dbReference type="Gene3D" id="1.10.520.20">
    <property type="entry name" value="N-terminal domain of the delta subunit of the F1F0-ATP synthase"/>
    <property type="match status" value="1"/>
</dbReference>
<dbReference type="HAMAP" id="MF_01416">
    <property type="entry name" value="ATP_synth_delta_bact"/>
    <property type="match status" value="1"/>
</dbReference>
<dbReference type="InterPro" id="IPR026015">
    <property type="entry name" value="ATP_synth_OSCP/delta_N_sf"/>
</dbReference>
<dbReference type="InterPro" id="IPR020781">
    <property type="entry name" value="ATPase_OSCP/d_CS"/>
</dbReference>
<dbReference type="InterPro" id="IPR000711">
    <property type="entry name" value="ATPase_OSCP/dsu"/>
</dbReference>
<dbReference type="NCBIfam" id="TIGR01145">
    <property type="entry name" value="ATP_synt_delta"/>
    <property type="match status" value="1"/>
</dbReference>
<dbReference type="NCBIfam" id="NF004402">
    <property type="entry name" value="PRK05758.2-2"/>
    <property type="match status" value="1"/>
</dbReference>
<dbReference type="PANTHER" id="PTHR11910">
    <property type="entry name" value="ATP SYNTHASE DELTA CHAIN"/>
    <property type="match status" value="1"/>
</dbReference>
<dbReference type="Pfam" id="PF00213">
    <property type="entry name" value="OSCP"/>
    <property type="match status" value="1"/>
</dbReference>
<dbReference type="PRINTS" id="PR00125">
    <property type="entry name" value="ATPASEDELTA"/>
</dbReference>
<dbReference type="SUPFAM" id="SSF47928">
    <property type="entry name" value="N-terminal domain of the delta subunit of the F1F0-ATP synthase"/>
    <property type="match status" value="1"/>
</dbReference>
<dbReference type="PROSITE" id="PS00389">
    <property type="entry name" value="ATPASE_DELTA"/>
    <property type="match status" value="1"/>
</dbReference>
<protein>
    <recommendedName>
        <fullName evidence="1">ATP synthase subunit delta</fullName>
    </recommendedName>
    <alternativeName>
        <fullName evidence="1">ATP synthase F(1) sector subunit delta</fullName>
    </alternativeName>
    <alternativeName>
        <fullName evidence="1">F-type ATPase subunit delta</fullName>
        <shortName evidence="1">F-ATPase subunit delta</shortName>
    </alternativeName>
</protein>
<feature type="chain" id="PRO_1000184634" description="ATP synthase subunit delta">
    <location>
        <begin position="1"/>
        <end position="179"/>
    </location>
</feature>
<sequence>MADLITVARPYAEALYGLAKESGQEQAWADALQALAAMIADVQAQAFLTDPERADAEKVSLLSAVPVAVDVKAWKAFLALLIHNDRWPATAEIGTLFADAMRRAEGVVDVLVTSAIALDAGQKTAVQSALERRFAGHKVAFREAVDAALIGGLVIHTGDLTIDASVRGQVQQLARTLRS</sequence>
<proteinExistence type="inferred from homology"/>
<gene>
    <name evidence="1" type="primary">atpH</name>
    <name type="ordered locus">Lferr_2810</name>
</gene>
<accession>B5ER45</accession>
<comment type="function">
    <text evidence="1">F(1)F(0) ATP synthase produces ATP from ADP in the presence of a proton or sodium gradient. F-type ATPases consist of two structural domains, F(1) containing the extramembraneous catalytic core and F(0) containing the membrane proton channel, linked together by a central stalk and a peripheral stalk. During catalysis, ATP synthesis in the catalytic domain of F(1) is coupled via a rotary mechanism of the central stalk subunits to proton translocation.</text>
</comment>
<comment type="function">
    <text evidence="1">This protein is part of the stalk that links CF(0) to CF(1). It either transmits conformational changes from CF(0) to CF(1) or is implicated in proton conduction.</text>
</comment>
<comment type="subunit">
    <text evidence="1">F-type ATPases have 2 components, F(1) - the catalytic core - and F(0) - the membrane proton channel. F(1) has five subunits: alpha(3), beta(3), gamma(1), delta(1), epsilon(1). F(0) has three main subunits: a(1), b(2) and c(10-14). The alpha and beta chains form an alternating ring which encloses part of the gamma chain. F(1) is attached to F(0) by a central stalk formed by the gamma and epsilon chains, while a peripheral stalk is formed by the delta and b chains.</text>
</comment>
<comment type="subcellular location">
    <subcellularLocation>
        <location evidence="1">Cell inner membrane</location>
        <topology evidence="1">Peripheral membrane protein</topology>
    </subcellularLocation>
</comment>
<comment type="similarity">
    <text evidence="1">Belongs to the ATPase delta chain family.</text>
</comment>
<organism>
    <name type="scientific">Acidithiobacillus ferrooxidans (strain ATCC 53993 / BNL-5-31)</name>
    <name type="common">Leptospirillum ferrooxidans (ATCC 53993)</name>
    <dbReference type="NCBI Taxonomy" id="380394"/>
    <lineage>
        <taxon>Bacteria</taxon>
        <taxon>Pseudomonadati</taxon>
        <taxon>Pseudomonadota</taxon>
        <taxon>Acidithiobacillia</taxon>
        <taxon>Acidithiobacillales</taxon>
        <taxon>Acidithiobacillaceae</taxon>
        <taxon>Acidithiobacillus</taxon>
    </lineage>
</organism>